<sequence length="588" mass="64684">MATCSAYLCCPATSASLKKRVFPDGSAGFLFFGGRRLSNRLVTPKSVIRADLNSMVSDMSTNAPKGLFPPEPEHYRGPKLKVAIIGAGLAGMSTAVELLDQGHEVDIYESRTFIGGKVGSFVDKRGNHIEMGLHVFFGCYNNLFRLMKKVGAEKNLLVKEHTHTFVNKGGEIGELDFRFPVGAPLHGINAFLSTNQLKTYDKARNAVALALSPVVRALVDPDGALQQIRDLDSVSFSDWFMSKGGTRASIQRMWDPVAYALGFIDCDNISARCMLTIFALFATKTEASLLRMLKGSPDVYLSGPIKKYIIDKGGRFHLRWGCREVLYETSSDGSMYVSGLAMSKATQKKIVKADAYVAACVVPGIKRLVPQKWRELEFFGNIYKLIGVPVVTVQLRYNGWVTELQDLERSRQSKRATGLDNLLYTPDADFSCFADLALASPEDYYIEGQGSLLQCVLTPGDPYMPLPNEEIIRRVSKQVLALFPSSQGLEVTWSSVVKIGQSLYREGPGKDPFRPDQKTPVENFFLAGSYTKQDYIDSMEGATLSGRQASAYICDAGEQLLALRKKIAAAELNEISKGVSLSDELSLV</sequence>
<dbReference type="EC" id="1.3.5.6"/>
<dbReference type="EMBL" id="X89897">
    <property type="protein sequence ID" value="CAA61985.1"/>
    <property type="molecule type" value="mRNA"/>
</dbReference>
<dbReference type="PIR" id="S66625">
    <property type="entry name" value="S66625"/>
</dbReference>
<dbReference type="RefSeq" id="NP_001311497.1">
    <property type="nucleotide sequence ID" value="NM_001324568.1"/>
</dbReference>
<dbReference type="SMR" id="Q9SMJ3"/>
<dbReference type="ChEMBL" id="CHEMBL2268004"/>
<dbReference type="GeneID" id="107839468"/>
<dbReference type="KEGG" id="ag:CAA61985"/>
<dbReference type="KEGG" id="cann:107839468"/>
<dbReference type="OrthoDB" id="5046242at2759"/>
<dbReference type="SABIO-RK" id="Q9SMJ3"/>
<dbReference type="UniPathway" id="UPA00803"/>
<dbReference type="GO" id="GO:0009507">
    <property type="term" value="C:chloroplast"/>
    <property type="evidence" value="ECO:0007669"/>
    <property type="project" value="UniProtKB-SubCell"/>
</dbReference>
<dbReference type="GO" id="GO:0009509">
    <property type="term" value="C:chromoplast"/>
    <property type="evidence" value="ECO:0007669"/>
    <property type="project" value="UniProtKB-SubCell"/>
</dbReference>
<dbReference type="GO" id="GO:0016719">
    <property type="term" value="F:9,9'-di-cis-zeta-carotene desaturase activity"/>
    <property type="evidence" value="ECO:0007669"/>
    <property type="project" value="UniProtKB-EC"/>
</dbReference>
<dbReference type="GO" id="GO:0016117">
    <property type="term" value="P:carotenoid biosynthetic process"/>
    <property type="evidence" value="ECO:0007669"/>
    <property type="project" value="UniProtKB-KW"/>
</dbReference>
<dbReference type="FunFam" id="3.50.50.60:FF:000111">
    <property type="entry name" value="Zeta-carotene desaturase"/>
    <property type="match status" value="1"/>
</dbReference>
<dbReference type="Gene3D" id="3.50.50.60">
    <property type="entry name" value="FAD/NAD(P)-binding domain"/>
    <property type="match status" value="1"/>
</dbReference>
<dbReference type="InterPro" id="IPR002937">
    <property type="entry name" value="Amino_oxidase"/>
</dbReference>
<dbReference type="InterPro" id="IPR036188">
    <property type="entry name" value="FAD/NAD-bd_sf"/>
</dbReference>
<dbReference type="InterPro" id="IPR014103">
    <property type="entry name" value="Zeta_caro_desat"/>
</dbReference>
<dbReference type="InterPro" id="IPR050464">
    <property type="entry name" value="Zeta_carotene_desat/Oxidored"/>
</dbReference>
<dbReference type="NCBIfam" id="TIGR02732">
    <property type="entry name" value="zeta_caro_desat"/>
    <property type="match status" value="1"/>
</dbReference>
<dbReference type="PANTHER" id="PTHR42923">
    <property type="entry name" value="PROTOPORPHYRINOGEN OXIDASE"/>
    <property type="match status" value="1"/>
</dbReference>
<dbReference type="PANTHER" id="PTHR42923:SF41">
    <property type="entry name" value="ZETA-CAROTENE DESATURASE, CHLOROPLASTIC_CHROMOPLASTIC"/>
    <property type="match status" value="1"/>
</dbReference>
<dbReference type="Pfam" id="PF01593">
    <property type="entry name" value="Amino_oxidase"/>
    <property type="match status" value="1"/>
</dbReference>
<dbReference type="PRINTS" id="PR00419">
    <property type="entry name" value="ADXRDTASE"/>
</dbReference>
<dbReference type="SUPFAM" id="SSF51905">
    <property type="entry name" value="FAD/NAD(P)-binding domain"/>
    <property type="match status" value="1"/>
</dbReference>
<name>ZDS_CAPAN</name>
<comment type="function">
    <text evidence="2 3">Catalyzes the conversion of zeta-carotene to lycopene via the intermediary of neurosporene. It carries out two consecutive desaturations (introduction of double bonds) at positions C-7 and C-7'. Shows stereoselectivity toward trans C15-C15'zeta-carotene double bond. The zeta-carotene produced by the phytoene desaturase PDS has a C15-C15' double bond in the cis configuration and it requires isomerization before being recognized as substrate by ZDS. No activity with all-trans-zeta-carotene. The main product is 7,9,7',9'-tetra-cis-lycopene (pro-lycopene).</text>
</comment>
<comment type="catalytic activity">
    <reaction evidence="2 3">
        <text>9,9'-di-cis-zeta-carotene + 2 a quinone = 7,7',9,9'-tetra-cis-lycopene + 2 a quinol</text>
        <dbReference type="Rhea" id="RHEA:30955"/>
        <dbReference type="ChEBI" id="CHEBI:24646"/>
        <dbReference type="ChEBI" id="CHEBI:48716"/>
        <dbReference type="ChEBI" id="CHEBI:62466"/>
        <dbReference type="ChEBI" id="CHEBI:132124"/>
        <dbReference type="EC" id="1.3.5.6"/>
    </reaction>
</comment>
<comment type="cofactor">
    <cofactor evidence="2">
        <name>decylplastoquinone</name>
        <dbReference type="ChEBI" id="CHEBI:72953"/>
    </cofactor>
    <cofactor evidence="2">
        <name>6-decylubiquinone</name>
        <dbReference type="ChEBI" id="CHEBI:52020"/>
    </cofactor>
    <text evidence="2">Lipophilic quinones such as decyl-plastoquinone or decyl-ubiquinone.</text>
</comment>
<comment type="biophysicochemical properties">
    <kinetics>
        <KM evidence="2">8.4 uM for zeta-carotene</KM>
        <KM evidence="2">9 uM for neurosporene</KM>
        <Vmax evidence="2">0.665 nmol/h/mg enzyme with zeta-carotene as substrate</Vmax>
        <Vmax evidence="2">0.0542 nmol/h/mg enzyme with neurosporene as substrate</Vmax>
    </kinetics>
</comment>
<comment type="pathway">
    <text>Carotenoid biosynthesis; lycopene biosynthesis.</text>
</comment>
<comment type="subunit">
    <text evidence="2">Monomer and dimer.</text>
</comment>
<comment type="subcellular location">
    <subcellularLocation>
        <location>Plastid</location>
        <location>Chloroplast</location>
    </subcellularLocation>
    <subcellularLocation>
        <location>Plastid</location>
        <location>Chromoplast</location>
    </subcellularLocation>
</comment>
<comment type="similarity">
    <text evidence="4">Belongs to the zeta carotene desaturase family.</text>
</comment>
<proteinExistence type="evidence at protein level"/>
<reference key="1">
    <citation type="journal article" date="1995" name="FEBS Lett.">
        <title>Molecular cloning and functional expression in E. coli of a novel plant enzyme mediating zeta-carotene desaturation.</title>
        <authorList>
            <person name="Albrecht M."/>
            <person name="Klein A."/>
            <person name="Hugueney P."/>
            <person name="Sandmann G."/>
            <person name="Kuntz M."/>
        </authorList>
    </citation>
    <scope>NUCLEOTIDE SEQUENCE [MRNA]</scope>
    <source>
        <strain>cv. Lamuyo</strain>
        <tissue>Fruit</tissue>
    </source>
</reference>
<reference key="2">
    <citation type="journal article" date="1999" name="Eur. J. Biochem.">
        <title>Catalytic properties of an expressed and purified higher plant type zeta-carotene desaturase from Capsicum annuum.</title>
        <authorList>
            <person name="Breitenbach J."/>
            <person name="Kuntz M."/>
            <person name="Takaichi S."/>
            <person name="Sandmann G."/>
        </authorList>
    </citation>
    <scope>FUNCTION</scope>
    <scope>CATALYTIC ACTIVITY</scope>
    <scope>COFACTOR</scope>
    <scope>SUBUNIT</scope>
    <scope>BIOPHYSICOCHEMICAL PROPERTIES</scope>
</reference>
<reference key="3">
    <citation type="journal article" date="2005" name="Planta">
        <title>zeta-Carotene cis isomers as products and substrates in the plant poly-cis carotenoid biosynthetic pathway to lycopene.</title>
        <authorList>
            <person name="Breitenbach J."/>
            <person name="Sandmann G."/>
        </authorList>
    </citation>
    <scope>FUNCTION</scope>
    <scope>CATALYTIC ACTIVITY</scope>
</reference>
<accession>Q9SMJ3</accession>
<feature type="transit peptide" description="Chloroplast and chromoplast" evidence="1">
    <location>
        <begin position="1"/>
        <end position="49"/>
    </location>
</feature>
<feature type="chain" id="PRO_0000041606" description="Zeta-carotene desaturase, chloroplastic/chromoplastic">
    <location>
        <begin position="50"/>
        <end position="588"/>
    </location>
</feature>
<keyword id="KW-0125">Carotenoid biosynthesis</keyword>
<keyword id="KW-0150">Chloroplast</keyword>
<keyword id="KW-0957">Chromoplast</keyword>
<keyword id="KW-0560">Oxidoreductase</keyword>
<keyword id="KW-0934">Plastid</keyword>
<keyword id="KW-0809">Transit peptide</keyword>
<organism>
    <name type="scientific">Capsicum annuum</name>
    <name type="common">Capsicum pepper</name>
    <dbReference type="NCBI Taxonomy" id="4072"/>
    <lineage>
        <taxon>Eukaryota</taxon>
        <taxon>Viridiplantae</taxon>
        <taxon>Streptophyta</taxon>
        <taxon>Embryophyta</taxon>
        <taxon>Tracheophyta</taxon>
        <taxon>Spermatophyta</taxon>
        <taxon>Magnoliopsida</taxon>
        <taxon>eudicotyledons</taxon>
        <taxon>Gunneridae</taxon>
        <taxon>Pentapetalae</taxon>
        <taxon>asterids</taxon>
        <taxon>lamiids</taxon>
        <taxon>Solanales</taxon>
        <taxon>Solanaceae</taxon>
        <taxon>Solanoideae</taxon>
        <taxon>Capsiceae</taxon>
        <taxon>Capsicum</taxon>
    </lineage>
</organism>
<protein>
    <recommendedName>
        <fullName>Zeta-carotene desaturase, chloroplastic/chromoplastic</fullName>
        <ecNumber>1.3.5.6</ecNumber>
    </recommendedName>
    <alternativeName>
        <fullName>9,9'-di-cis-zeta-carotene desaturase</fullName>
    </alternativeName>
    <alternativeName>
        <fullName>Carotene 7,8-desaturase</fullName>
    </alternativeName>
</protein>
<evidence type="ECO:0000255" key="1"/>
<evidence type="ECO:0000269" key="2">
    <source>
    </source>
</evidence>
<evidence type="ECO:0000269" key="3">
    <source>
    </source>
</evidence>
<evidence type="ECO:0000305" key="4"/>
<gene>
    <name type="primary">ZDS</name>
</gene>